<keyword id="KW-0238">DNA-binding</keyword>
<keyword id="KW-0479">Metal-binding</keyword>
<keyword id="KW-0539">Nucleus</keyword>
<keyword id="KW-1185">Reference proteome</keyword>
<keyword id="KW-0804">Transcription</keyword>
<keyword id="KW-0805">Transcription regulation</keyword>
<keyword id="KW-0862">Zinc</keyword>
<feature type="chain" id="PRO_0000450427" description="Acurin A biosynthesis cluster transcription regulator">
    <location>
        <begin position="1"/>
        <end position="631"/>
    </location>
</feature>
<feature type="DNA-binding region" description="Zn(2)-C6 fungal-type" evidence="1">
    <location>
        <begin position="30"/>
        <end position="62"/>
    </location>
</feature>
<feature type="region of interest" description="Disordered" evidence="2">
    <location>
        <begin position="1"/>
        <end position="28"/>
    </location>
</feature>
<feature type="region of interest" description="Disordered" evidence="2">
    <location>
        <begin position="64"/>
        <end position="141"/>
    </location>
</feature>
<feature type="region of interest" description="Disordered" evidence="2">
    <location>
        <begin position="489"/>
        <end position="522"/>
    </location>
</feature>
<feature type="region of interest" description="Disordered" evidence="2">
    <location>
        <begin position="536"/>
        <end position="573"/>
    </location>
</feature>
<feature type="compositionally biased region" description="Polar residues" evidence="2">
    <location>
        <begin position="1"/>
        <end position="11"/>
    </location>
</feature>
<feature type="compositionally biased region" description="Basic and acidic residues" evidence="2">
    <location>
        <begin position="88"/>
        <end position="99"/>
    </location>
</feature>
<feature type="compositionally biased region" description="Polar residues" evidence="2">
    <location>
        <begin position="119"/>
        <end position="128"/>
    </location>
</feature>
<sequence>MSPNMSLTASHPQQPQPTPQSKAQLTRQACNRCHASKLKCLRPPGVTTSKSCIRCIKADTECVYDPPQRFGRPRQKSRPQPESVPPRIEAREPEVTDPRRARHGSTIGARWESSERESNGSLAPSSAAESPYTAAESPDNRSSAAVAAAPLVGMDYASSHFPEPLESERTSELLDAFQSESMQLDVDSYWGETDPVMPPAATVPYSDLLTGPIDLDFTVSDQDDRAKIPKHALDPALSGADTGSTADDYVLDLVQLQASVNQNNRELAAMIRKAQSALGMSDGRVGQALPIPDSQFKTHLQRNLKASEQTLDVLHRINSQFAPVSRETRPPSRSYGLDPTLDRLYADCVSQDHAFGVGGDELGVRATTPPGVSAADPQHSILAFLVLTTYLRLLHNFDALISILQDRLRCSASLDPRRPLHLSEDISASDSSSNPLLDVSLGSFSFSSSSARSLQAMLNVQMINTVLTKIKSSTQRMLLGPDYLPPSSCSSSASTSSTASTTSCSTRAPPSSATGGAHHPATAGSIFFHHAHSHSHSSSDHLFSQPEGRGYAPYNHAFHPPPPSRHTHNYPTPETITPPSSVLGGVSGTTPPPFVSGVDHVVRRALTEVQELELSLRNRARAIQQWSEEGF</sequence>
<evidence type="ECO:0000255" key="1">
    <source>
        <dbReference type="PROSITE-ProRule" id="PRU00227"/>
    </source>
</evidence>
<evidence type="ECO:0000256" key="2">
    <source>
        <dbReference type="SAM" id="MobiDB-lite"/>
    </source>
</evidence>
<evidence type="ECO:0000269" key="3">
    <source>
    </source>
</evidence>
<evidence type="ECO:0000303" key="4">
    <source>
    </source>
</evidence>
<proteinExistence type="inferred from homology"/>
<name>ACRR_ASPA1</name>
<reference key="1">
    <citation type="journal article" date="2017" name="Genome Biol.">
        <title>Comparative genomics reveals high biological diversity and specific adaptations in the industrially and medically important fungal genus Aspergillus.</title>
        <authorList>
            <person name="de Vries R.P."/>
            <person name="Riley R."/>
            <person name="Wiebenga A."/>
            <person name="Aguilar-Osorio G."/>
            <person name="Amillis S."/>
            <person name="Uchima C.A."/>
            <person name="Anderluh G."/>
            <person name="Asadollahi M."/>
            <person name="Askin M."/>
            <person name="Barry K."/>
            <person name="Battaglia E."/>
            <person name="Bayram O."/>
            <person name="Benocci T."/>
            <person name="Braus-Stromeyer S.A."/>
            <person name="Caldana C."/>
            <person name="Canovas D."/>
            <person name="Cerqueira G.C."/>
            <person name="Chen F."/>
            <person name="Chen W."/>
            <person name="Choi C."/>
            <person name="Clum A."/>
            <person name="Dos Santos R.A."/>
            <person name="Damasio A.R."/>
            <person name="Diallinas G."/>
            <person name="Emri T."/>
            <person name="Fekete E."/>
            <person name="Flipphi M."/>
            <person name="Freyberg S."/>
            <person name="Gallo A."/>
            <person name="Gournas C."/>
            <person name="Habgood R."/>
            <person name="Hainaut M."/>
            <person name="Harispe M.L."/>
            <person name="Henrissat B."/>
            <person name="Hilden K.S."/>
            <person name="Hope R."/>
            <person name="Hossain A."/>
            <person name="Karabika E."/>
            <person name="Karaffa L."/>
            <person name="Karanyi Z."/>
            <person name="Krasevec N."/>
            <person name="Kuo A."/>
            <person name="Kusch H."/>
            <person name="LaButti K."/>
            <person name="Lagendijk E.L."/>
            <person name="Lapidus A."/>
            <person name="Levasseur A."/>
            <person name="Lindquist E."/>
            <person name="Lipzen A."/>
            <person name="Logrieco A.F."/>
            <person name="MacCabe A."/>
            <person name="Maekelae M.R."/>
            <person name="Malavazi I."/>
            <person name="Melin P."/>
            <person name="Meyer V."/>
            <person name="Mielnichuk N."/>
            <person name="Miskei M."/>
            <person name="Molnar A.P."/>
            <person name="Mule G."/>
            <person name="Ngan C.Y."/>
            <person name="Orejas M."/>
            <person name="Orosz E."/>
            <person name="Ouedraogo J.P."/>
            <person name="Overkamp K.M."/>
            <person name="Park H.-S."/>
            <person name="Perrone G."/>
            <person name="Piumi F."/>
            <person name="Punt P.J."/>
            <person name="Ram A.F."/>
            <person name="Ramon A."/>
            <person name="Rauscher S."/>
            <person name="Record E."/>
            <person name="Riano-Pachon D.M."/>
            <person name="Robert V."/>
            <person name="Roehrig J."/>
            <person name="Ruller R."/>
            <person name="Salamov A."/>
            <person name="Salih N.S."/>
            <person name="Samson R.A."/>
            <person name="Sandor E."/>
            <person name="Sanguinetti M."/>
            <person name="Schuetze T."/>
            <person name="Sepcic K."/>
            <person name="Shelest E."/>
            <person name="Sherlock G."/>
            <person name="Sophianopoulou V."/>
            <person name="Squina F.M."/>
            <person name="Sun H."/>
            <person name="Susca A."/>
            <person name="Todd R.B."/>
            <person name="Tsang A."/>
            <person name="Unkles S.E."/>
            <person name="van de Wiele N."/>
            <person name="van Rossen-Uffink D."/>
            <person name="Oliveira J.V."/>
            <person name="Vesth T.C."/>
            <person name="Visser J."/>
            <person name="Yu J.-H."/>
            <person name="Zhou M."/>
            <person name="Andersen M.R."/>
            <person name="Archer D.B."/>
            <person name="Baker S.E."/>
            <person name="Benoit I."/>
            <person name="Brakhage A.A."/>
            <person name="Braus G.H."/>
            <person name="Fischer R."/>
            <person name="Frisvad J.C."/>
            <person name="Goldman G.H."/>
            <person name="Houbraken J."/>
            <person name="Oakley B."/>
            <person name="Pocsi I."/>
            <person name="Scazzocchio C."/>
            <person name="Seiboth B."/>
            <person name="vanKuyk P.A."/>
            <person name="Wortman J."/>
            <person name="Dyer P.S."/>
            <person name="Grigoriev I.V."/>
        </authorList>
    </citation>
    <scope>NUCLEOTIDE SEQUENCE [LARGE SCALE GENOMIC DNA]</scope>
    <source>
        <strain>ATCC 16872 / CBS 172.66 / WB 5094</strain>
    </source>
</reference>
<reference key="2">
    <citation type="journal article" date="2020" name="Fungal Genet. Biol.">
        <title>Acurin A, a novel hybrid compound, biosynthesized by individually translated PKS- and NRPS-encoding genes in Aspergillus aculeatus.</title>
        <authorList>
            <person name="Wolff P.B."/>
            <person name="Nielsen M.L."/>
            <person name="Slot J.C."/>
            <person name="Andersen L.N."/>
            <person name="Petersen L.M."/>
            <person name="Isbrandt T."/>
            <person name="Holm D.K."/>
            <person name="Mortensen U.H."/>
            <person name="Noedvig C.S."/>
            <person name="Larsen T.O."/>
            <person name="Hoof J.B."/>
        </authorList>
    </citation>
    <scope>FUNCTION</scope>
    <scope>DISRUPTION PHENOTYPE</scope>
</reference>
<comment type="function">
    <text evidence="3">Transcription factor that positively regulates the expression of the cluster that mediates the biosynthesis of acurin A, a highly reduced polyketide coupled to a serine via a peptide bond.</text>
</comment>
<comment type="subcellular location">
    <subcellularLocation>
        <location evidence="1">Nucleus</location>
    </subcellularLocation>
</comment>
<comment type="disruption phenotype">
    <text evidence="3">Abolishes the production of acurin A.</text>
</comment>
<protein>
    <recommendedName>
        <fullName evidence="4">Acurin A biosynthesis cluster transcription regulator</fullName>
    </recommendedName>
    <alternativeName>
        <fullName evidence="4">Acurin A biosynthesis cluster protein R</fullName>
    </alternativeName>
</protein>
<accession>A0A1L9WQN2</accession>
<dbReference type="EMBL" id="KV878980">
    <property type="protein sequence ID" value="OJJ98493.1"/>
    <property type="molecule type" value="Genomic_DNA"/>
</dbReference>
<dbReference type="RefSeq" id="XP_020054833.1">
    <property type="nucleotide sequence ID" value="XM_020196522.1"/>
</dbReference>
<dbReference type="SMR" id="A0A1L9WQN2"/>
<dbReference type="STRING" id="690307.A0A1L9WQN2"/>
<dbReference type="GeneID" id="30970336"/>
<dbReference type="VEuPathDB" id="FungiDB:ASPACDRAFT_122290"/>
<dbReference type="OMA" id="EIRHKTR"/>
<dbReference type="OrthoDB" id="4478994at2759"/>
<dbReference type="Proteomes" id="UP000184546">
    <property type="component" value="Unassembled WGS sequence"/>
</dbReference>
<dbReference type="GO" id="GO:0005634">
    <property type="term" value="C:nucleus"/>
    <property type="evidence" value="ECO:0007669"/>
    <property type="project" value="UniProtKB-SubCell"/>
</dbReference>
<dbReference type="GO" id="GO:0000981">
    <property type="term" value="F:DNA-binding transcription factor activity, RNA polymerase II-specific"/>
    <property type="evidence" value="ECO:0007669"/>
    <property type="project" value="InterPro"/>
</dbReference>
<dbReference type="GO" id="GO:0043565">
    <property type="term" value="F:sequence-specific DNA binding"/>
    <property type="evidence" value="ECO:0007669"/>
    <property type="project" value="TreeGrafter"/>
</dbReference>
<dbReference type="GO" id="GO:0008270">
    <property type="term" value="F:zinc ion binding"/>
    <property type="evidence" value="ECO:0007669"/>
    <property type="project" value="InterPro"/>
</dbReference>
<dbReference type="GO" id="GO:0045944">
    <property type="term" value="P:positive regulation of transcription by RNA polymerase II"/>
    <property type="evidence" value="ECO:0007669"/>
    <property type="project" value="TreeGrafter"/>
</dbReference>
<dbReference type="CDD" id="cd00067">
    <property type="entry name" value="GAL4"/>
    <property type="match status" value="1"/>
</dbReference>
<dbReference type="Gene3D" id="4.10.240.10">
    <property type="entry name" value="Zn(2)-C6 fungal-type DNA-binding domain"/>
    <property type="match status" value="1"/>
</dbReference>
<dbReference type="InterPro" id="IPR051711">
    <property type="entry name" value="Stress_Response_Reg"/>
</dbReference>
<dbReference type="InterPro" id="IPR036864">
    <property type="entry name" value="Zn2-C6_fun-type_DNA-bd_sf"/>
</dbReference>
<dbReference type="InterPro" id="IPR001138">
    <property type="entry name" value="Zn2Cys6_DnaBD"/>
</dbReference>
<dbReference type="PANTHER" id="PTHR47540">
    <property type="entry name" value="THIAMINE REPRESSIBLE GENES REGULATORY PROTEIN THI5"/>
    <property type="match status" value="1"/>
</dbReference>
<dbReference type="PANTHER" id="PTHR47540:SF2">
    <property type="entry name" value="ZN(II)2CYS6 TRANSCRIPTION FACTOR (EUROFUNG)"/>
    <property type="match status" value="1"/>
</dbReference>
<dbReference type="Pfam" id="PF00172">
    <property type="entry name" value="Zn_clus"/>
    <property type="match status" value="1"/>
</dbReference>
<dbReference type="SMART" id="SM00066">
    <property type="entry name" value="GAL4"/>
    <property type="match status" value="1"/>
</dbReference>
<dbReference type="SUPFAM" id="SSF57701">
    <property type="entry name" value="Zn2/Cys6 DNA-binding domain"/>
    <property type="match status" value="1"/>
</dbReference>
<dbReference type="PROSITE" id="PS00463">
    <property type="entry name" value="ZN2_CY6_FUNGAL_1"/>
    <property type="match status" value="1"/>
</dbReference>
<dbReference type="PROSITE" id="PS50048">
    <property type="entry name" value="ZN2_CY6_FUNGAL_2"/>
    <property type="match status" value="1"/>
</dbReference>
<organism>
    <name type="scientific">Aspergillus aculeatus (strain ATCC 16872 / CBS 172.66 / WB 5094)</name>
    <dbReference type="NCBI Taxonomy" id="690307"/>
    <lineage>
        <taxon>Eukaryota</taxon>
        <taxon>Fungi</taxon>
        <taxon>Dikarya</taxon>
        <taxon>Ascomycota</taxon>
        <taxon>Pezizomycotina</taxon>
        <taxon>Eurotiomycetes</taxon>
        <taxon>Eurotiomycetidae</taxon>
        <taxon>Eurotiales</taxon>
        <taxon>Aspergillaceae</taxon>
        <taxon>Aspergillus</taxon>
        <taxon>Aspergillus subgen. Circumdati</taxon>
    </lineage>
</organism>
<gene>
    <name evidence="4" type="primary">acrR</name>
    <name type="ORF">ASPACDRAFT_122290</name>
</gene>